<accession>B3PXK3</accession>
<dbReference type="EC" id="5.4.2.11" evidence="1"/>
<dbReference type="EMBL" id="CP001074">
    <property type="protein sequence ID" value="ACE89209.1"/>
    <property type="molecule type" value="Genomic_DNA"/>
</dbReference>
<dbReference type="SMR" id="B3PXK3"/>
<dbReference type="KEGG" id="rec:RHECIAT_CH0000213"/>
<dbReference type="eggNOG" id="COG0588">
    <property type="taxonomic scope" value="Bacteria"/>
</dbReference>
<dbReference type="HOGENOM" id="CLU_033323_1_4_5"/>
<dbReference type="UniPathway" id="UPA00109">
    <property type="reaction ID" value="UER00186"/>
</dbReference>
<dbReference type="Proteomes" id="UP000008817">
    <property type="component" value="Chromosome"/>
</dbReference>
<dbReference type="GO" id="GO:0004619">
    <property type="term" value="F:phosphoglycerate mutase activity"/>
    <property type="evidence" value="ECO:0007669"/>
    <property type="project" value="UniProtKB-EC"/>
</dbReference>
<dbReference type="GO" id="GO:0006094">
    <property type="term" value="P:gluconeogenesis"/>
    <property type="evidence" value="ECO:0007669"/>
    <property type="project" value="UniProtKB-UniRule"/>
</dbReference>
<dbReference type="GO" id="GO:0006096">
    <property type="term" value="P:glycolytic process"/>
    <property type="evidence" value="ECO:0007669"/>
    <property type="project" value="UniProtKB-UniRule"/>
</dbReference>
<dbReference type="CDD" id="cd07067">
    <property type="entry name" value="HP_PGM_like"/>
    <property type="match status" value="1"/>
</dbReference>
<dbReference type="Gene3D" id="3.40.50.1240">
    <property type="entry name" value="Phosphoglycerate mutase-like"/>
    <property type="match status" value="1"/>
</dbReference>
<dbReference type="HAMAP" id="MF_01039">
    <property type="entry name" value="PGAM_GpmA"/>
    <property type="match status" value="1"/>
</dbReference>
<dbReference type="InterPro" id="IPR013078">
    <property type="entry name" value="His_Pase_superF_clade-1"/>
</dbReference>
<dbReference type="InterPro" id="IPR029033">
    <property type="entry name" value="His_PPase_superfam"/>
</dbReference>
<dbReference type="InterPro" id="IPR001345">
    <property type="entry name" value="PG/BPGM_mutase_AS"/>
</dbReference>
<dbReference type="InterPro" id="IPR005952">
    <property type="entry name" value="Phosphogly_mut1"/>
</dbReference>
<dbReference type="NCBIfam" id="TIGR01258">
    <property type="entry name" value="pgm_1"/>
    <property type="match status" value="1"/>
</dbReference>
<dbReference type="NCBIfam" id="NF002339">
    <property type="entry name" value="PRK01295.1"/>
    <property type="match status" value="1"/>
</dbReference>
<dbReference type="PANTHER" id="PTHR11931">
    <property type="entry name" value="PHOSPHOGLYCERATE MUTASE"/>
    <property type="match status" value="1"/>
</dbReference>
<dbReference type="Pfam" id="PF00300">
    <property type="entry name" value="His_Phos_1"/>
    <property type="match status" value="1"/>
</dbReference>
<dbReference type="PIRSF" id="PIRSF000709">
    <property type="entry name" value="6PFK_2-Ptase"/>
    <property type="match status" value="1"/>
</dbReference>
<dbReference type="SMART" id="SM00855">
    <property type="entry name" value="PGAM"/>
    <property type="match status" value="1"/>
</dbReference>
<dbReference type="SUPFAM" id="SSF53254">
    <property type="entry name" value="Phosphoglycerate mutase-like"/>
    <property type="match status" value="1"/>
</dbReference>
<dbReference type="PROSITE" id="PS00175">
    <property type="entry name" value="PG_MUTASE"/>
    <property type="match status" value="1"/>
</dbReference>
<organism>
    <name type="scientific">Rhizobium etli (strain CIAT 652)</name>
    <dbReference type="NCBI Taxonomy" id="491916"/>
    <lineage>
        <taxon>Bacteria</taxon>
        <taxon>Pseudomonadati</taxon>
        <taxon>Pseudomonadota</taxon>
        <taxon>Alphaproteobacteria</taxon>
        <taxon>Hyphomicrobiales</taxon>
        <taxon>Rhizobiaceae</taxon>
        <taxon>Rhizobium/Agrobacterium group</taxon>
        <taxon>Rhizobium</taxon>
    </lineage>
</organism>
<gene>
    <name evidence="1" type="primary">gpmA</name>
    <name type="ordered locus">RHECIAT_CH0000213</name>
</gene>
<proteinExistence type="inferred from homology"/>
<feature type="chain" id="PRO_1000135967" description="2,3-bisphosphoglycerate-dependent phosphoglycerate mutase">
    <location>
        <begin position="1"/>
        <end position="211"/>
    </location>
</feature>
<feature type="active site" description="Tele-phosphohistidine intermediate" evidence="1">
    <location>
        <position position="10"/>
    </location>
</feature>
<feature type="active site" description="Proton donor/acceptor" evidence="1">
    <location>
        <position position="88"/>
    </location>
</feature>
<feature type="binding site" evidence="1">
    <location>
        <begin position="9"/>
        <end position="16"/>
    </location>
    <ligand>
        <name>substrate</name>
    </ligand>
</feature>
<feature type="binding site" evidence="1">
    <location>
        <begin position="22"/>
        <end position="23"/>
    </location>
    <ligand>
        <name>substrate</name>
    </ligand>
</feature>
<feature type="binding site" evidence="1">
    <location>
        <position position="61"/>
    </location>
    <ligand>
        <name>substrate</name>
    </ligand>
</feature>
<feature type="binding site" evidence="1">
    <location>
        <begin position="88"/>
        <end position="91"/>
    </location>
    <ligand>
        <name>substrate</name>
    </ligand>
</feature>
<feature type="binding site" evidence="1">
    <location>
        <position position="99"/>
    </location>
    <ligand>
        <name>substrate</name>
    </ligand>
</feature>
<feature type="binding site" evidence="1">
    <location>
        <begin position="115"/>
        <end position="116"/>
    </location>
    <ligand>
        <name>substrate</name>
    </ligand>
</feature>
<feature type="binding site" evidence="1">
    <location>
        <begin position="159"/>
        <end position="160"/>
    </location>
    <ligand>
        <name>substrate</name>
    </ligand>
</feature>
<feature type="site" description="Transition state stabilizer" evidence="1">
    <location>
        <position position="158"/>
    </location>
</feature>
<protein>
    <recommendedName>
        <fullName evidence="1">2,3-bisphosphoglycerate-dependent phosphoglycerate mutase</fullName>
        <shortName evidence="1">BPG-dependent PGAM</shortName>
        <shortName evidence="1">PGAM</shortName>
        <shortName evidence="1">Phosphoglyceromutase</shortName>
        <shortName evidence="1">dPGM</shortName>
        <ecNumber evidence="1">5.4.2.11</ecNumber>
    </recommendedName>
</protein>
<evidence type="ECO:0000255" key="1">
    <source>
        <dbReference type="HAMAP-Rule" id="MF_01039"/>
    </source>
</evidence>
<comment type="function">
    <text evidence="1">Catalyzes the interconversion of 2-phosphoglycerate and 3-phosphoglycerate.</text>
</comment>
<comment type="catalytic activity">
    <reaction evidence="1">
        <text>(2R)-2-phosphoglycerate = (2R)-3-phosphoglycerate</text>
        <dbReference type="Rhea" id="RHEA:15901"/>
        <dbReference type="ChEBI" id="CHEBI:58272"/>
        <dbReference type="ChEBI" id="CHEBI:58289"/>
        <dbReference type="EC" id="5.4.2.11"/>
    </reaction>
</comment>
<comment type="pathway">
    <text evidence="1">Carbohydrate degradation; glycolysis; pyruvate from D-glyceraldehyde 3-phosphate: step 3/5.</text>
</comment>
<comment type="subunit">
    <text evidence="1">Homodimer.</text>
</comment>
<comment type="similarity">
    <text evidence="1">Belongs to the phosphoglycerate mutase family. BPG-dependent PGAM subfamily.</text>
</comment>
<keyword id="KW-0312">Gluconeogenesis</keyword>
<keyword id="KW-0324">Glycolysis</keyword>
<keyword id="KW-0413">Isomerase</keyword>
<sequence length="211" mass="23153">MSGTLVLVRHGQSDWNLKNLFTGWKDPDLTELGIQEANAGGAALAEYGIKFDVAYTSALVRAQHTLKLILDKVGQPDLQTIRDQALNERDYGDLSGLNKDDARAKWGEEQVHVWRRSYDVPPPGGESLRDTGARVWPYYLTEILPRVLHGEKVLVAAHGNSLRSLVMVLDKLTKEGVLALNLATGVPMVYKLHADSTVASKEVLGDMSGAH</sequence>
<reference key="1">
    <citation type="journal article" date="2010" name="Appl. Environ. Microbiol.">
        <title>Conserved symbiotic plasmid DNA sequences in the multireplicon pangenomic structure of Rhizobium etli.</title>
        <authorList>
            <person name="Gonzalez V."/>
            <person name="Acosta J.L."/>
            <person name="Santamaria R.I."/>
            <person name="Bustos P."/>
            <person name="Fernandez J.L."/>
            <person name="Hernandez Gonzalez I.L."/>
            <person name="Diaz R."/>
            <person name="Flores M."/>
            <person name="Palacios R."/>
            <person name="Mora J."/>
            <person name="Davila G."/>
        </authorList>
    </citation>
    <scope>NUCLEOTIDE SEQUENCE [LARGE SCALE GENOMIC DNA]</scope>
    <source>
        <strain>CIAT 652</strain>
    </source>
</reference>
<name>GPMA_RHIE6</name>